<sequence length="390" mass="45304">MLHVNKCQLCETRRPSICESCLKKQLYDFYHKRDEFSRDIESELEKVAKLKSESFSLKGKITQKEELTYRLQNLAASLNEKKSLSCDLHSRKQLIEDDLSNRKKSINIASQKLAGLSHSTSDYFSKEYLTAYRRSELLQNKLHEYQKKLITRVLDMYQLHWQRDLVLNTQGCTQKSAQMGSEFNPDSIDSSLAYRLSKLSMGNSKSDLSHSDNETGHFYSNFFSQVMELNASVTISGIPVCIRSKEKMFLNPDCALTLSFICIFLAQYTSIPLPCPLQLPSPDQKPMTSFSSEQMLYIMYNIVWISWNCGIFSFPRGITQSQLFELMQYTGFWLVQLRTKPLTSQKPDWHYKMGMDFDLFHRLYLARLPIPINYSSLRSRSSSKPYQLIS</sequence>
<dbReference type="EMBL" id="CU329670">
    <property type="protein sequence ID" value="CAA16952.1"/>
    <property type="molecule type" value="Genomic_DNA"/>
</dbReference>
<dbReference type="PIR" id="T38370">
    <property type="entry name" value="T38370"/>
</dbReference>
<dbReference type="RefSeq" id="NP_593618.1">
    <property type="nucleotide sequence ID" value="NM_001019049.2"/>
</dbReference>
<dbReference type="SMR" id="O42862"/>
<dbReference type="BioGRID" id="278187">
    <property type="interactions" value="12"/>
</dbReference>
<dbReference type="ComplexPortal" id="CPX-25763">
    <property type="entry name" value="Phosphatidylinositol 3-kinase complex, class III, type I"/>
</dbReference>
<dbReference type="STRING" id="284812.O42862"/>
<dbReference type="PaxDb" id="4896-SPAC25A8.02.1"/>
<dbReference type="EnsemblFungi" id="SPAC25A8.02.1">
    <property type="protein sequence ID" value="SPAC25A8.02.1:pep"/>
    <property type="gene ID" value="SPAC25A8.02"/>
</dbReference>
<dbReference type="GeneID" id="2541691"/>
<dbReference type="KEGG" id="spo:2541691"/>
<dbReference type="PomBase" id="SPAC25A8.02">
    <property type="gene designation" value="atg14"/>
</dbReference>
<dbReference type="VEuPathDB" id="FungiDB:SPAC25A8.02"/>
<dbReference type="HOGENOM" id="CLU_714017_0_0_1"/>
<dbReference type="InParanoid" id="O42862"/>
<dbReference type="OMA" id="CIFLAQY"/>
<dbReference type="Reactome" id="R-SPO-1632852">
    <property type="pathway name" value="Macroautophagy"/>
</dbReference>
<dbReference type="PRO" id="PR:O42862"/>
<dbReference type="Proteomes" id="UP000002485">
    <property type="component" value="Chromosome I"/>
</dbReference>
<dbReference type="GO" id="GO:0005776">
    <property type="term" value="C:autophagosome"/>
    <property type="evidence" value="ECO:0000318"/>
    <property type="project" value="GO_Central"/>
</dbReference>
<dbReference type="GO" id="GO:0005737">
    <property type="term" value="C:cytoplasm"/>
    <property type="evidence" value="ECO:0007005"/>
    <property type="project" value="PomBase"/>
</dbReference>
<dbReference type="GO" id="GO:0005829">
    <property type="term" value="C:cytosol"/>
    <property type="evidence" value="ECO:0007005"/>
    <property type="project" value="PomBase"/>
</dbReference>
<dbReference type="GO" id="GO:0097629">
    <property type="term" value="C:extrinsic component of omegasome membrane"/>
    <property type="evidence" value="ECO:0000318"/>
    <property type="project" value="GO_Central"/>
</dbReference>
<dbReference type="GO" id="GO:0097632">
    <property type="term" value="C:extrinsic component of phagophore assembly site membrane"/>
    <property type="evidence" value="ECO:0000318"/>
    <property type="project" value="GO_Central"/>
</dbReference>
<dbReference type="GO" id="GO:0000329">
    <property type="term" value="C:fungal-type vacuole membrane"/>
    <property type="evidence" value="ECO:0000266"/>
    <property type="project" value="PomBase"/>
</dbReference>
<dbReference type="GO" id="GO:0000407">
    <property type="term" value="C:phagophore assembly site"/>
    <property type="evidence" value="ECO:0000314"/>
    <property type="project" value="PomBase"/>
</dbReference>
<dbReference type="GO" id="GO:0035032">
    <property type="term" value="C:phosphatidylinositol 3-kinase complex, class III"/>
    <property type="evidence" value="ECO:0000318"/>
    <property type="project" value="GO_Central"/>
</dbReference>
<dbReference type="GO" id="GO:0034271">
    <property type="term" value="C:phosphatidylinositol 3-kinase complex, class III, type I"/>
    <property type="evidence" value="ECO:0000314"/>
    <property type="project" value="PomBase"/>
</dbReference>
<dbReference type="GO" id="GO:0035014">
    <property type="term" value="F:phosphatidylinositol 3-kinase regulator activity"/>
    <property type="evidence" value="ECO:0000318"/>
    <property type="project" value="GO_Central"/>
</dbReference>
<dbReference type="GO" id="GO:0043495">
    <property type="term" value="F:protein-membrane adaptor activity"/>
    <property type="evidence" value="ECO:0000318"/>
    <property type="project" value="GO_Central"/>
</dbReference>
<dbReference type="GO" id="GO:0000045">
    <property type="term" value="P:autophagosome assembly"/>
    <property type="evidence" value="ECO:0000318"/>
    <property type="project" value="GO_Central"/>
</dbReference>
<dbReference type="GO" id="GO:0016240">
    <property type="term" value="P:autophagosome membrane docking"/>
    <property type="evidence" value="ECO:0000318"/>
    <property type="project" value="GO_Central"/>
</dbReference>
<dbReference type="GO" id="GO:0009267">
    <property type="term" value="P:cellular response to starvation"/>
    <property type="evidence" value="ECO:0000318"/>
    <property type="project" value="GO_Central"/>
</dbReference>
<dbReference type="GO" id="GO:0016236">
    <property type="term" value="P:macroautophagy"/>
    <property type="evidence" value="ECO:0000315"/>
    <property type="project" value="PomBase"/>
</dbReference>
<dbReference type="GO" id="GO:0000423">
    <property type="term" value="P:mitophagy"/>
    <property type="evidence" value="ECO:0000318"/>
    <property type="project" value="GO_Central"/>
</dbReference>
<dbReference type="GO" id="GO:0015031">
    <property type="term" value="P:protein transport"/>
    <property type="evidence" value="ECO:0007669"/>
    <property type="project" value="UniProtKB-KW"/>
</dbReference>
<dbReference type="InterPro" id="IPR018791">
    <property type="entry name" value="UV_resistance/autophagy_Atg14"/>
</dbReference>
<dbReference type="PANTHER" id="PTHR13664">
    <property type="entry name" value="BECLIN 1-ASSOCIATED AUTOPHAGY-RELATED KEY REGULATOR"/>
    <property type="match status" value="1"/>
</dbReference>
<dbReference type="PANTHER" id="PTHR13664:SF0">
    <property type="entry name" value="BECLIN 1-ASSOCIATED AUTOPHAGY-RELATED KEY REGULATOR"/>
    <property type="match status" value="1"/>
</dbReference>
<dbReference type="Pfam" id="PF10186">
    <property type="entry name" value="ATG14"/>
    <property type="match status" value="1"/>
</dbReference>
<evidence type="ECO:0000250" key="1"/>
<evidence type="ECO:0000255" key="2"/>
<evidence type="ECO:0000269" key="3">
    <source>
    </source>
</evidence>
<evidence type="ECO:0000269" key="4">
    <source>
    </source>
</evidence>
<evidence type="ECO:0000305" key="5"/>
<feature type="chain" id="PRO_0000304106" description="Autophagy-related protein 14">
    <location>
        <begin position="1"/>
        <end position="390"/>
    </location>
</feature>
<feature type="region of interest" description="Cysteine repeats" evidence="1">
    <location>
        <begin position="7"/>
        <end position="21"/>
    </location>
</feature>
<feature type="coiled-coil region" evidence="2">
    <location>
        <begin position="31"/>
        <end position="83"/>
    </location>
</feature>
<comment type="function">
    <text evidence="4">Functions as a part of the autophagy-specific VPS34 PI3-kinase complex I that plays a role in autophagosome assembly (PubMed:31941401). This complex is essential to recruit the atg8-phosphatidylinositol conjugate and the atg12-atg5 conjugate to the pre-autophagosomal structure (PubMed:31941401).</text>
</comment>
<comment type="subunit">
    <text evidence="3 4">Component of the autophagy-specific vps34 PI3-kinase complex I composed of vps15, atg6, pik3/vps34, atg14 and atg38.</text>
</comment>
<comment type="subcellular location">
    <subcellularLocation>
        <location>Cytoplasm</location>
    </subcellularLocation>
    <subcellularLocation>
        <location>Preautophagosomal structure membrane</location>
        <topology>Peripheral membrane protein</topology>
    </subcellularLocation>
    <subcellularLocation>
        <location evidence="1">Vacuole membrane</location>
        <topology evidence="1">Peripheral membrane protein</topology>
    </subcellularLocation>
</comment>
<comment type="domain">
    <text evidence="1">Coiled-Coils at the N-terminal half are essential for autophagy.</text>
</comment>
<comment type="similarity">
    <text evidence="5">Belongs to the ATG14 family.</text>
</comment>
<name>ATG14_SCHPO</name>
<proteinExistence type="evidence at protein level"/>
<gene>
    <name type="primary">atg14</name>
    <name type="ORF">SPAC25A8.02</name>
</gene>
<keyword id="KW-0072">Autophagy</keyword>
<keyword id="KW-0175">Coiled coil</keyword>
<keyword id="KW-0963">Cytoplasm</keyword>
<keyword id="KW-0472">Membrane</keyword>
<keyword id="KW-0653">Protein transport</keyword>
<keyword id="KW-1185">Reference proteome</keyword>
<keyword id="KW-0813">Transport</keyword>
<keyword id="KW-0926">Vacuole</keyword>
<accession>O42862</accession>
<organism>
    <name type="scientific">Schizosaccharomyces pombe (strain 972 / ATCC 24843)</name>
    <name type="common">Fission yeast</name>
    <dbReference type="NCBI Taxonomy" id="284812"/>
    <lineage>
        <taxon>Eukaryota</taxon>
        <taxon>Fungi</taxon>
        <taxon>Dikarya</taxon>
        <taxon>Ascomycota</taxon>
        <taxon>Taphrinomycotina</taxon>
        <taxon>Schizosaccharomycetes</taxon>
        <taxon>Schizosaccharomycetales</taxon>
        <taxon>Schizosaccharomycetaceae</taxon>
        <taxon>Schizosaccharomyces</taxon>
    </lineage>
</organism>
<protein>
    <recommendedName>
        <fullName>Autophagy-related protein 14</fullName>
    </recommendedName>
</protein>
<reference key="1">
    <citation type="journal article" date="2002" name="Nature">
        <title>The genome sequence of Schizosaccharomyces pombe.</title>
        <authorList>
            <person name="Wood V."/>
            <person name="Gwilliam R."/>
            <person name="Rajandream M.A."/>
            <person name="Lyne M.H."/>
            <person name="Lyne R."/>
            <person name="Stewart A."/>
            <person name="Sgouros J.G."/>
            <person name="Peat N."/>
            <person name="Hayles J."/>
            <person name="Baker S.G."/>
            <person name="Basham D."/>
            <person name="Bowman S."/>
            <person name="Brooks K."/>
            <person name="Brown D."/>
            <person name="Brown S."/>
            <person name="Chillingworth T."/>
            <person name="Churcher C.M."/>
            <person name="Collins M."/>
            <person name="Connor R."/>
            <person name="Cronin A."/>
            <person name="Davis P."/>
            <person name="Feltwell T."/>
            <person name="Fraser A."/>
            <person name="Gentles S."/>
            <person name="Goble A."/>
            <person name="Hamlin N."/>
            <person name="Harris D.E."/>
            <person name="Hidalgo J."/>
            <person name="Hodgson G."/>
            <person name="Holroyd S."/>
            <person name="Hornsby T."/>
            <person name="Howarth S."/>
            <person name="Huckle E.J."/>
            <person name="Hunt S."/>
            <person name="Jagels K."/>
            <person name="James K.D."/>
            <person name="Jones L."/>
            <person name="Jones M."/>
            <person name="Leather S."/>
            <person name="McDonald S."/>
            <person name="McLean J."/>
            <person name="Mooney P."/>
            <person name="Moule S."/>
            <person name="Mungall K.L."/>
            <person name="Murphy L.D."/>
            <person name="Niblett D."/>
            <person name="Odell C."/>
            <person name="Oliver K."/>
            <person name="O'Neil S."/>
            <person name="Pearson D."/>
            <person name="Quail M.A."/>
            <person name="Rabbinowitsch E."/>
            <person name="Rutherford K.M."/>
            <person name="Rutter S."/>
            <person name="Saunders D."/>
            <person name="Seeger K."/>
            <person name="Sharp S."/>
            <person name="Skelton J."/>
            <person name="Simmonds M.N."/>
            <person name="Squares R."/>
            <person name="Squares S."/>
            <person name="Stevens K."/>
            <person name="Taylor K."/>
            <person name="Taylor R.G."/>
            <person name="Tivey A."/>
            <person name="Walsh S.V."/>
            <person name="Warren T."/>
            <person name="Whitehead S."/>
            <person name="Woodward J.R."/>
            <person name="Volckaert G."/>
            <person name="Aert R."/>
            <person name="Robben J."/>
            <person name="Grymonprez B."/>
            <person name="Weltjens I."/>
            <person name="Vanstreels E."/>
            <person name="Rieger M."/>
            <person name="Schaefer M."/>
            <person name="Mueller-Auer S."/>
            <person name="Gabel C."/>
            <person name="Fuchs M."/>
            <person name="Duesterhoeft A."/>
            <person name="Fritzc C."/>
            <person name="Holzer E."/>
            <person name="Moestl D."/>
            <person name="Hilbert H."/>
            <person name="Borzym K."/>
            <person name="Langer I."/>
            <person name="Beck A."/>
            <person name="Lehrach H."/>
            <person name="Reinhardt R."/>
            <person name="Pohl T.M."/>
            <person name="Eger P."/>
            <person name="Zimmermann W."/>
            <person name="Wedler H."/>
            <person name="Wambutt R."/>
            <person name="Purnelle B."/>
            <person name="Goffeau A."/>
            <person name="Cadieu E."/>
            <person name="Dreano S."/>
            <person name="Gloux S."/>
            <person name="Lelaure V."/>
            <person name="Mottier S."/>
            <person name="Galibert F."/>
            <person name="Aves S.J."/>
            <person name="Xiang Z."/>
            <person name="Hunt C."/>
            <person name="Moore K."/>
            <person name="Hurst S.M."/>
            <person name="Lucas M."/>
            <person name="Rochet M."/>
            <person name="Gaillardin C."/>
            <person name="Tallada V.A."/>
            <person name="Garzon A."/>
            <person name="Thode G."/>
            <person name="Daga R.R."/>
            <person name="Cruzado L."/>
            <person name="Jimenez J."/>
            <person name="Sanchez M."/>
            <person name="del Rey F."/>
            <person name="Benito J."/>
            <person name="Dominguez A."/>
            <person name="Revuelta J.L."/>
            <person name="Moreno S."/>
            <person name="Armstrong J."/>
            <person name="Forsburg S.L."/>
            <person name="Cerutti L."/>
            <person name="Lowe T."/>
            <person name="McCombie W.R."/>
            <person name="Paulsen I."/>
            <person name="Potashkin J."/>
            <person name="Shpakovski G.V."/>
            <person name="Ussery D."/>
            <person name="Barrell B.G."/>
            <person name="Nurse P."/>
        </authorList>
    </citation>
    <scope>NUCLEOTIDE SEQUENCE [LARGE SCALE GENOMIC DNA]</scope>
    <source>
        <strain>972 / ATCC 24843</strain>
    </source>
</reference>
<reference key="2">
    <citation type="journal article" date="2006" name="Nat. Biotechnol.">
        <title>ORFeome cloning and global analysis of protein localization in the fission yeast Schizosaccharomyces pombe.</title>
        <authorList>
            <person name="Matsuyama A."/>
            <person name="Arai R."/>
            <person name="Yashiroda Y."/>
            <person name="Shirai A."/>
            <person name="Kamata A."/>
            <person name="Sekido S."/>
            <person name="Kobayashi Y."/>
            <person name="Hashimoto A."/>
            <person name="Hamamoto M."/>
            <person name="Hiraoka Y."/>
            <person name="Horinouchi S."/>
            <person name="Yoshida M."/>
        </authorList>
    </citation>
    <scope>SUBCELLULAR LOCATION [LARGE SCALE ANALYSIS]</scope>
</reference>
<reference key="3">
    <citation type="journal article" date="2013" name="PLoS Genet.">
        <title>Global analysis of fission yeast mating genes reveals new autophagy factors.</title>
        <authorList>
            <person name="Sun L.L."/>
            <person name="Li M."/>
            <person name="Suo F."/>
            <person name="Liu X.M."/>
            <person name="Shen E.Z."/>
            <person name="Yang B."/>
            <person name="Dong M.Q."/>
            <person name="He W.Z."/>
            <person name="Du L.L."/>
        </authorList>
    </citation>
    <scope>IDENTIFICATION</scope>
    <scope>INTERACTION WITH ATG6</scope>
    <scope>SUBCELLULAR LOCATION</scope>
</reference>
<reference key="4">
    <citation type="journal article" date="2020" name="Autophagy">
        <title>Atg38-Atg8 interaction in fission yeast establishes a positive feedback loop to promote autophagy.</title>
        <authorList>
            <person name="Yu Z.Q."/>
            <person name="Sun L.L."/>
            <person name="Jiang Z.D."/>
            <person name="Liu X.M."/>
            <person name="Zhao D."/>
            <person name="Wang H.T."/>
            <person name="He W.Z."/>
            <person name="Dong M.Q."/>
            <person name="Du L.L."/>
        </authorList>
    </citation>
    <scope>FUNCTION</scope>
    <scope>IDENTIFICATION IN THE AUTOPHAGY-SPECIFIC VPS34 PI3-KINASE COMPLEX I</scope>
</reference>